<gene>
    <name type="primary">DBNDD1</name>
</gene>
<protein>
    <recommendedName>
        <fullName>Dysbindin domain-containing protein 1</fullName>
    </recommendedName>
</protein>
<proteinExistence type="evidence at transcript level"/>
<feature type="chain" id="PRO_0000378274" description="Dysbindin domain-containing protein 1">
    <location>
        <begin position="1"/>
        <end position="158"/>
    </location>
</feature>
<feature type="region of interest" description="Disordered" evidence="2">
    <location>
        <begin position="1"/>
        <end position="38"/>
    </location>
</feature>
<feature type="region of interest" description="Disordered" evidence="2">
    <location>
        <begin position="96"/>
        <end position="158"/>
    </location>
</feature>
<feature type="compositionally biased region" description="Basic and acidic residues" evidence="2">
    <location>
        <begin position="125"/>
        <end position="141"/>
    </location>
</feature>
<feature type="modified residue" description="Phosphoserine" evidence="1">
    <location>
        <position position="95"/>
    </location>
</feature>
<feature type="modified residue" description="Phosphoserine" evidence="1">
    <location>
        <position position="119"/>
    </location>
</feature>
<evidence type="ECO:0000250" key="1">
    <source>
        <dbReference type="UniProtKB" id="Q9H9R9"/>
    </source>
</evidence>
<evidence type="ECO:0000256" key="2">
    <source>
        <dbReference type="SAM" id="MobiDB-lite"/>
    </source>
</evidence>
<evidence type="ECO:0000305" key="3"/>
<reference key="1">
    <citation type="submission" date="2007-06" db="EMBL/GenBank/DDBJ databases">
        <authorList>
            <consortium name="NIH - Mammalian Gene Collection (MGC) project"/>
        </authorList>
    </citation>
    <scope>NUCLEOTIDE SEQUENCE [LARGE SCALE MRNA]</scope>
    <source>
        <strain>Hereford</strain>
        <tissue>Thalamus</tissue>
    </source>
</reference>
<organism>
    <name type="scientific">Bos taurus</name>
    <name type="common">Bovine</name>
    <dbReference type="NCBI Taxonomy" id="9913"/>
    <lineage>
        <taxon>Eukaryota</taxon>
        <taxon>Metazoa</taxon>
        <taxon>Chordata</taxon>
        <taxon>Craniata</taxon>
        <taxon>Vertebrata</taxon>
        <taxon>Euteleostomi</taxon>
        <taxon>Mammalia</taxon>
        <taxon>Eutheria</taxon>
        <taxon>Laurasiatheria</taxon>
        <taxon>Artiodactyla</taxon>
        <taxon>Ruminantia</taxon>
        <taxon>Pecora</taxon>
        <taxon>Bovidae</taxon>
        <taxon>Bovinae</taxon>
        <taxon>Bos</taxon>
    </lineage>
</organism>
<sequence length="158" mass="17020">MEPSEGASPGGLVKEVDMPQAALSAPVPVTGTSGQSPMAEEELGIPIPAPGLLQVTERRQPLSSVSSLEVHFDLLDLTELTDMSDQELAEVFADSDDENVASDSHAGLHPLPRAGCLRSPSWTRTRAEQNREKQPFGDPERQPAIVDTILTVERPKED</sequence>
<dbReference type="EMBL" id="BC146182">
    <property type="protein sequence ID" value="AAI46183.1"/>
    <property type="molecule type" value="mRNA"/>
</dbReference>
<dbReference type="RefSeq" id="NP_001092475.1">
    <property type="nucleotide sequence ID" value="NM_001099005.1"/>
</dbReference>
<dbReference type="FunCoup" id="A6H7B4">
    <property type="interactions" value="1327"/>
</dbReference>
<dbReference type="STRING" id="9913.ENSBTAP00000069279"/>
<dbReference type="PaxDb" id="9913-ENSBTAP00000027077"/>
<dbReference type="Ensembl" id="ENSBTAT00000027077.6">
    <property type="protein sequence ID" value="ENSBTAP00000027077.5"/>
    <property type="gene ID" value="ENSBTAG00000020318.7"/>
</dbReference>
<dbReference type="GeneID" id="518157"/>
<dbReference type="KEGG" id="bta:518157"/>
<dbReference type="CTD" id="79007"/>
<dbReference type="VEuPathDB" id="HostDB:ENSBTAG00000020318"/>
<dbReference type="VGNC" id="VGNC:27891">
    <property type="gene designation" value="DBNDD1"/>
</dbReference>
<dbReference type="eggNOG" id="ENOG502S0DA">
    <property type="taxonomic scope" value="Eukaryota"/>
</dbReference>
<dbReference type="GeneTree" id="ENSGT00390000018903"/>
<dbReference type="HOGENOM" id="CLU_087637_0_0_1"/>
<dbReference type="InParanoid" id="A6H7B4"/>
<dbReference type="OMA" id="CHTPVAE"/>
<dbReference type="OrthoDB" id="9891754at2759"/>
<dbReference type="Proteomes" id="UP000009136">
    <property type="component" value="Chromosome 18"/>
</dbReference>
<dbReference type="Bgee" id="ENSBTAG00000020318">
    <property type="expression patterns" value="Expressed in temporal cortex and 102 other cell types or tissues"/>
</dbReference>
<dbReference type="GO" id="GO:0005737">
    <property type="term" value="C:cytoplasm"/>
    <property type="evidence" value="ECO:0007669"/>
    <property type="project" value="InterPro"/>
</dbReference>
<dbReference type="GO" id="GO:0009966">
    <property type="term" value="P:regulation of signal transduction"/>
    <property type="evidence" value="ECO:0000318"/>
    <property type="project" value="GO_Central"/>
</dbReference>
<dbReference type="InterPro" id="IPR007531">
    <property type="entry name" value="Dysbindin"/>
</dbReference>
<dbReference type="PANTHER" id="PTHR16294:SF4">
    <property type="entry name" value="DYSBINDIN DOMAIN-CONTAINING PROTEIN 1"/>
    <property type="match status" value="1"/>
</dbReference>
<dbReference type="PANTHER" id="PTHR16294">
    <property type="entry name" value="DYSTROBREVIN BINDING PROTEIN 1 DYSBINDIN"/>
    <property type="match status" value="1"/>
</dbReference>
<dbReference type="Pfam" id="PF04440">
    <property type="entry name" value="Dysbindin"/>
    <property type="match status" value="1"/>
</dbReference>
<name>DBND1_BOVIN</name>
<accession>A6H7B4</accession>
<keyword id="KW-0597">Phosphoprotein</keyword>
<keyword id="KW-1185">Reference proteome</keyword>
<comment type="similarity">
    <text evidence="3">Belongs to the dysbindin family.</text>
</comment>